<feature type="chain" id="PRO_0000341900" description="2-succinyl-5-enolpyruvyl-6-hydroxy-3-cyclohexene-1-carboxylate synthase">
    <location>
        <begin position="1"/>
        <end position="586"/>
    </location>
</feature>
<evidence type="ECO:0000255" key="1">
    <source>
        <dbReference type="HAMAP-Rule" id="MF_01659"/>
    </source>
</evidence>
<proteinExistence type="inferred from homology"/>
<name>MEND_NATPD</name>
<accession>Q3IQZ0</accession>
<reference key="1">
    <citation type="journal article" date="2005" name="Genome Res.">
        <title>Living with two extremes: conclusions from the genome sequence of Natronomonas pharaonis.</title>
        <authorList>
            <person name="Falb M."/>
            <person name="Pfeiffer F."/>
            <person name="Palm P."/>
            <person name="Rodewald K."/>
            <person name="Hickmann V."/>
            <person name="Tittor J."/>
            <person name="Oesterhelt D."/>
        </authorList>
    </citation>
    <scope>NUCLEOTIDE SEQUENCE [LARGE SCALE GENOMIC DNA]</scope>
    <source>
        <strain>ATCC 35678 / DSM 2160 / CIP 103997 / JCM 8858 / NBRC 14720 / NCIMB 2260 / Gabara</strain>
    </source>
</reference>
<dbReference type="EC" id="2.2.1.9" evidence="1"/>
<dbReference type="EMBL" id="CR936257">
    <property type="protein sequence ID" value="CAI49454.1"/>
    <property type="molecule type" value="Genomic_DNA"/>
</dbReference>
<dbReference type="RefSeq" id="WP_011323079.1">
    <property type="nucleotide sequence ID" value="NC_007426.1"/>
</dbReference>
<dbReference type="SMR" id="Q3IQZ0"/>
<dbReference type="STRING" id="348780.NP_2726A"/>
<dbReference type="EnsemblBacteria" id="CAI49454">
    <property type="protein sequence ID" value="CAI49454"/>
    <property type="gene ID" value="NP_2726A"/>
</dbReference>
<dbReference type="GeneID" id="3702910"/>
<dbReference type="KEGG" id="nph:NP_2726A"/>
<dbReference type="eggNOG" id="arCOG04611">
    <property type="taxonomic scope" value="Archaea"/>
</dbReference>
<dbReference type="HOGENOM" id="CLU_006051_3_0_2"/>
<dbReference type="OrthoDB" id="212847at2157"/>
<dbReference type="UniPathway" id="UPA00079"/>
<dbReference type="UniPathway" id="UPA01057">
    <property type="reaction ID" value="UER00164"/>
</dbReference>
<dbReference type="Proteomes" id="UP000002698">
    <property type="component" value="Chromosome"/>
</dbReference>
<dbReference type="GO" id="GO:0070204">
    <property type="term" value="F:2-succinyl-5-enolpyruvyl-6-hydroxy-3-cyclohexene-1-carboxylic-acid synthase activity"/>
    <property type="evidence" value="ECO:0007669"/>
    <property type="project" value="UniProtKB-UniRule"/>
</dbReference>
<dbReference type="GO" id="GO:0000287">
    <property type="term" value="F:magnesium ion binding"/>
    <property type="evidence" value="ECO:0007669"/>
    <property type="project" value="UniProtKB-UniRule"/>
</dbReference>
<dbReference type="GO" id="GO:0030145">
    <property type="term" value="F:manganese ion binding"/>
    <property type="evidence" value="ECO:0007669"/>
    <property type="project" value="UniProtKB-UniRule"/>
</dbReference>
<dbReference type="GO" id="GO:0030976">
    <property type="term" value="F:thiamine pyrophosphate binding"/>
    <property type="evidence" value="ECO:0007669"/>
    <property type="project" value="UniProtKB-UniRule"/>
</dbReference>
<dbReference type="GO" id="GO:0009234">
    <property type="term" value="P:menaquinone biosynthetic process"/>
    <property type="evidence" value="ECO:0007669"/>
    <property type="project" value="UniProtKB-UniRule"/>
</dbReference>
<dbReference type="GO" id="GO:0006082">
    <property type="term" value="P:organic acid metabolic process"/>
    <property type="evidence" value="ECO:0007669"/>
    <property type="project" value="UniProtKB-ARBA"/>
</dbReference>
<dbReference type="GO" id="GO:0044272">
    <property type="term" value="P:sulfur compound biosynthetic process"/>
    <property type="evidence" value="ECO:0007669"/>
    <property type="project" value="UniProtKB-ARBA"/>
</dbReference>
<dbReference type="CDD" id="cd07037">
    <property type="entry name" value="TPP_PYR_MenD"/>
    <property type="match status" value="1"/>
</dbReference>
<dbReference type="CDD" id="cd02009">
    <property type="entry name" value="TPP_SHCHC_synthase"/>
    <property type="match status" value="1"/>
</dbReference>
<dbReference type="Gene3D" id="3.40.50.970">
    <property type="match status" value="2"/>
</dbReference>
<dbReference type="Gene3D" id="3.40.50.1220">
    <property type="entry name" value="TPP-binding domain"/>
    <property type="match status" value="1"/>
</dbReference>
<dbReference type="HAMAP" id="MF_01659">
    <property type="entry name" value="MenD"/>
    <property type="match status" value="1"/>
</dbReference>
<dbReference type="InterPro" id="IPR029035">
    <property type="entry name" value="DHS-like_NAD/FAD-binding_dom"/>
</dbReference>
<dbReference type="InterPro" id="IPR004433">
    <property type="entry name" value="MenaQ_synth_MenD"/>
</dbReference>
<dbReference type="InterPro" id="IPR029061">
    <property type="entry name" value="THDP-binding"/>
</dbReference>
<dbReference type="InterPro" id="IPR012001">
    <property type="entry name" value="Thiamin_PyroP_enz_TPP-bd_dom"/>
</dbReference>
<dbReference type="InterPro" id="IPR011766">
    <property type="entry name" value="TPP_enzyme_TPP-bd"/>
</dbReference>
<dbReference type="NCBIfam" id="TIGR00173">
    <property type="entry name" value="menD"/>
    <property type="match status" value="1"/>
</dbReference>
<dbReference type="PANTHER" id="PTHR42916">
    <property type="entry name" value="2-SUCCINYL-5-ENOLPYRUVYL-6-HYDROXY-3-CYCLOHEXENE-1-CARBOXYLATE SYNTHASE"/>
    <property type="match status" value="1"/>
</dbReference>
<dbReference type="PANTHER" id="PTHR42916:SF1">
    <property type="entry name" value="PROTEIN PHYLLO, CHLOROPLASTIC"/>
    <property type="match status" value="1"/>
</dbReference>
<dbReference type="Pfam" id="PF02775">
    <property type="entry name" value="TPP_enzyme_C"/>
    <property type="match status" value="1"/>
</dbReference>
<dbReference type="Pfam" id="PF02776">
    <property type="entry name" value="TPP_enzyme_N"/>
    <property type="match status" value="1"/>
</dbReference>
<dbReference type="PIRSF" id="PIRSF004983">
    <property type="entry name" value="MenD"/>
    <property type="match status" value="1"/>
</dbReference>
<dbReference type="SUPFAM" id="SSF52467">
    <property type="entry name" value="DHS-like NAD/FAD-binding domain"/>
    <property type="match status" value="1"/>
</dbReference>
<dbReference type="SUPFAM" id="SSF52518">
    <property type="entry name" value="Thiamin diphosphate-binding fold (THDP-binding)"/>
    <property type="match status" value="2"/>
</dbReference>
<keyword id="KW-0460">Magnesium</keyword>
<keyword id="KW-0464">Manganese</keyword>
<keyword id="KW-0474">Menaquinone biosynthesis</keyword>
<keyword id="KW-0479">Metal-binding</keyword>
<keyword id="KW-1185">Reference proteome</keyword>
<keyword id="KW-0786">Thiamine pyrophosphate</keyword>
<keyword id="KW-0808">Transferase</keyword>
<comment type="function">
    <text evidence="1">Catalyzes the thiamine diphosphate-dependent decarboxylation of 2-oxoglutarate and the subsequent addition of the resulting succinic semialdehyde-thiamine pyrophosphate anion to isochorismate to yield 2-succinyl-5-enolpyruvyl-6-hydroxy-3-cyclohexene-1-carboxylate (SEPHCHC).</text>
</comment>
<comment type="catalytic activity">
    <reaction evidence="1">
        <text>isochorismate + 2-oxoglutarate + H(+) = 5-enolpyruvoyl-6-hydroxy-2-succinyl-cyclohex-3-ene-1-carboxylate + CO2</text>
        <dbReference type="Rhea" id="RHEA:25593"/>
        <dbReference type="ChEBI" id="CHEBI:15378"/>
        <dbReference type="ChEBI" id="CHEBI:16526"/>
        <dbReference type="ChEBI" id="CHEBI:16810"/>
        <dbReference type="ChEBI" id="CHEBI:29780"/>
        <dbReference type="ChEBI" id="CHEBI:58818"/>
        <dbReference type="EC" id="2.2.1.9"/>
    </reaction>
</comment>
<comment type="cofactor">
    <cofactor evidence="1">
        <name>Mg(2+)</name>
        <dbReference type="ChEBI" id="CHEBI:18420"/>
    </cofactor>
    <cofactor evidence="1">
        <name>Mn(2+)</name>
        <dbReference type="ChEBI" id="CHEBI:29035"/>
    </cofactor>
</comment>
<comment type="cofactor">
    <cofactor evidence="1">
        <name>thiamine diphosphate</name>
        <dbReference type="ChEBI" id="CHEBI:58937"/>
    </cofactor>
    <text evidence="1">Binds 1 thiamine pyrophosphate per subunit.</text>
</comment>
<comment type="pathway">
    <text evidence="1">Quinol/quinone metabolism; 1,4-dihydroxy-2-naphthoate biosynthesis; 1,4-dihydroxy-2-naphthoate from chorismate: step 2/7.</text>
</comment>
<comment type="pathway">
    <text evidence="1">Quinol/quinone metabolism; menaquinone biosynthesis.</text>
</comment>
<comment type="subunit">
    <text evidence="1">Homodimer.</text>
</comment>
<comment type="similarity">
    <text evidence="1">Belongs to the TPP enzyme family. MenD subfamily.</text>
</comment>
<sequence length="586" mass="61363">MATPNVNTLWGQTVADELATVGIETAVLAPGSRSTPLAVAFAQHDDIEAVSLLDERSAAFFALGYAKRTGQPAPLVCTSGTALANFHPAVIEADTARVPMVLLTADRPPELADSGANQTIDQADLYGDAVRSYRTLPEPEAAARKLRSLRTTLCRAVGTATGTEPGPVHLNVPFRKPLEPLAAAEPPAGVPDGAVPDGFATENPLAARGRDGPFVEVHSGCTDPSATTVDELATAVEAAASGLIVCGPTDRPAPDAESLVALADATGFSVFADPLSGLRFGPHVDDAPVCGGYDAYLPALEQTPEVVIRFGASPTSKPLRQYLRDADARQFIVDPAGGWREATFTATDLVVADETRLATAVADAVDRTPGSYADRLAELEPGYWRLVEGEEPQEGAMLADAVALAPDPSTVFVSNSMPVRDLDRFGAPQAASLSVLGNRGASGIDGIASTALGAGFGTDDPLVAVTGDLAYYHDMNGLLAVSRAGVDATIVCINNDGGGIFHVLPIEAHESFDKWFRTPHGLDFEPSAALYDIEFARTDSREGFRSLYSEAVGSGETQVIEVQTESGHNHADRTALREAVVEELGR</sequence>
<gene>
    <name evidence="1" type="primary">menD</name>
    <name type="ordered locus">NP_2726A</name>
</gene>
<organism>
    <name type="scientific">Natronomonas pharaonis (strain ATCC 35678 / DSM 2160 / CIP 103997 / JCM 8858 / NBRC 14720 / NCIMB 2260 / Gabara)</name>
    <name type="common">Halobacterium pharaonis</name>
    <dbReference type="NCBI Taxonomy" id="348780"/>
    <lineage>
        <taxon>Archaea</taxon>
        <taxon>Methanobacteriati</taxon>
        <taxon>Methanobacteriota</taxon>
        <taxon>Stenosarchaea group</taxon>
        <taxon>Halobacteria</taxon>
        <taxon>Halobacteriales</taxon>
        <taxon>Haloarculaceae</taxon>
        <taxon>Natronomonas</taxon>
    </lineage>
</organism>
<protein>
    <recommendedName>
        <fullName evidence="1">2-succinyl-5-enolpyruvyl-6-hydroxy-3-cyclohexene-1-carboxylate synthase</fullName>
        <shortName evidence="1">SEPHCHC synthase</shortName>
        <ecNumber evidence="1">2.2.1.9</ecNumber>
    </recommendedName>
    <alternativeName>
        <fullName evidence="1">Menaquinone biosynthesis protein MenD</fullName>
    </alternativeName>
</protein>